<accession>Q2HJH3</accession>
<comment type="function">
    <text evidence="1">Exhibits ester hydrolase activity on the substrate p-nitrophenyl acetate.</text>
</comment>
<comment type="subunit">
    <text evidence="1">Monomer.</text>
</comment>
<comment type="subcellular location">
    <subcellularLocation>
        <location evidence="1">Nucleus</location>
    </subcellularLocation>
</comment>
<dbReference type="EC" id="3.1.-.-"/>
<dbReference type="EMBL" id="BC105390">
    <property type="protein sequence ID" value="AAI05391.1"/>
    <property type="molecule type" value="mRNA"/>
</dbReference>
<dbReference type="RefSeq" id="NP_001039780.1">
    <property type="nucleotide sequence ID" value="NM_001046315.2"/>
</dbReference>
<dbReference type="RefSeq" id="XP_005226700.1">
    <property type="nucleotide sequence ID" value="XM_005226643.5"/>
</dbReference>
<dbReference type="RefSeq" id="XP_005226701.1">
    <property type="nucleotide sequence ID" value="XM_005226644.5"/>
</dbReference>
<dbReference type="SMR" id="Q2HJH3"/>
<dbReference type="FunCoup" id="Q2HJH3">
    <property type="interactions" value="830"/>
</dbReference>
<dbReference type="STRING" id="9913.ENSBTAP00000004617"/>
<dbReference type="PaxDb" id="9913-ENSBTAP00000004617"/>
<dbReference type="PeptideAtlas" id="Q2HJH3"/>
<dbReference type="Ensembl" id="ENSBTAT00000004617.7">
    <property type="protein sequence ID" value="ENSBTAP00000004617.5"/>
    <property type="gene ID" value="ENSBTAG00000003550.7"/>
</dbReference>
<dbReference type="GeneID" id="530784"/>
<dbReference type="KEGG" id="bta:530784"/>
<dbReference type="CTD" id="530784"/>
<dbReference type="VEuPathDB" id="HostDB:ENSBTAG00000003550"/>
<dbReference type="VGNC" id="VGNC:52699">
    <property type="gene designation" value="C29H11orf54"/>
</dbReference>
<dbReference type="eggNOG" id="KOG4048">
    <property type="taxonomic scope" value="Eukaryota"/>
</dbReference>
<dbReference type="GeneTree" id="ENSGT00390000017214"/>
<dbReference type="HOGENOM" id="CLU_055541_0_0_1"/>
<dbReference type="InParanoid" id="Q2HJH3"/>
<dbReference type="OMA" id="YHIMPDF"/>
<dbReference type="OrthoDB" id="5119241at2759"/>
<dbReference type="TreeFam" id="TF313169"/>
<dbReference type="Proteomes" id="UP000009136">
    <property type="component" value="Chromosome 29"/>
</dbReference>
<dbReference type="Bgee" id="ENSBTAG00000003550">
    <property type="expression patterns" value="Expressed in liver and 104 other cell types or tissues"/>
</dbReference>
<dbReference type="GO" id="GO:0005737">
    <property type="term" value="C:cytoplasm"/>
    <property type="evidence" value="ECO:0007669"/>
    <property type="project" value="Ensembl"/>
</dbReference>
<dbReference type="GO" id="GO:0016604">
    <property type="term" value="C:nuclear body"/>
    <property type="evidence" value="ECO:0007669"/>
    <property type="project" value="Ensembl"/>
</dbReference>
<dbReference type="GO" id="GO:0005634">
    <property type="term" value="C:nucleus"/>
    <property type="evidence" value="ECO:0000318"/>
    <property type="project" value="GO_Central"/>
</dbReference>
<dbReference type="GO" id="GO:0016788">
    <property type="term" value="F:hydrolase activity, acting on ester bonds"/>
    <property type="evidence" value="ECO:0000318"/>
    <property type="project" value="GO_Central"/>
</dbReference>
<dbReference type="GO" id="GO:0008270">
    <property type="term" value="F:zinc ion binding"/>
    <property type="evidence" value="ECO:0000318"/>
    <property type="project" value="GO_Central"/>
</dbReference>
<dbReference type="GO" id="GO:0006974">
    <property type="term" value="P:DNA damage response"/>
    <property type="evidence" value="ECO:0007669"/>
    <property type="project" value="Ensembl"/>
</dbReference>
<dbReference type="GO" id="GO:0006282">
    <property type="term" value="P:regulation of DNA repair"/>
    <property type="evidence" value="ECO:0007669"/>
    <property type="project" value="Ensembl"/>
</dbReference>
<dbReference type="CDD" id="cd17298">
    <property type="entry name" value="DUF1907"/>
    <property type="match status" value="1"/>
</dbReference>
<dbReference type="InterPro" id="IPR015021">
    <property type="entry name" value="C11orf54_DUF1907"/>
</dbReference>
<dbReference type="PANTHER" id="PTHR13204:SF1">
    <property type="entry name" value="ESTER HYDROLASE C11ORF54"/>
    <property type="match status" value="1"/>
</dbReference>
<dbReference type="PANTHER" id="PTHR13204">
    <property type="entry name" value="PTD012 PROTEIN"/>
    <property type="match status" value="1"/>
</dbReference>
<dbReference type="Pfam" id="PF08925">
    <property type="entry name" value="DUF1907"/>
    <property type="match status" value="1"/>
</dbReference>
<dbReference type="SMART" id="SM01168">
    <property type="entry name" value="DUF1907"/>
    <property type="match status" value="1"/>
</dbReference>
<dbReference type="SUPFAM" id="SSF117856">
    <property type="entry name" value="AF0104/ALDC/Ptd012-like"/>
    <property type="match status" value="1"/>
</dbReference>
<reference key="1">
    <citation type="submission" date="2005-09" db="EMBL/GenBank/DDBJ databases">
        <authorList>
            <consortium name="NIH - Mammalian Gene Collection (MGC) project"/>
        </authorList>
    </citation>
    <scope>NUCLEOTIDE SEQUENCE [LARGE SCALE MRNA]</scope>
    <source>
        <strain>Hereford</strain>
        <tissue>Fetal liver</tissue>
    </source>
</reference>
<proteinExistence type="evidence at transcript level"/>
<protein>
    <recommendedName>
        <fullName>Ester hydrolase C11orf54 homolog</fullName>
        <ecNumber>3.1.-.-</ecNumber>
    </recommendedName>
</protein>
<organism>
    <name type="scientific">Bos taurus</name>
    <name type="common">Bovine</name>
    <dbReference type="NCBI Taxonomy" id="9913"/>
    <lineage>
        <taxon>Eukaryota</taxon>
        <taxon>Metazoa</taxon>
        <taxon>Chordata</taxon>
        <taxon>Craniata</taxon>
        <taxon>Vertebrata</taxon>
        <taxon>Euteleostomi</taxon>
        <taxon>Mammalia</taxon>
        <taxon>Eutheria</taxon>
        <taxon>Laurasiatheria</taxon>
        <taxon>Artiodactyla</taxon>
        <taxon>Ruminantia</taxon>
        <taxon>Pecora</taxon>
        <taxon>Bovidae</taxon>
        <taxon>Bovinae</taxon>
        <taxon>Bos</taxon>
    </lineage>
</organism>
<keyword id="KW-0378">Hydrolase</keyword>
<keyword id="KW-0479">Metal-binding</keyword>
<keyword id="KW-0539">Nucleus</keyword>
<keyword id="KW-1185">Reference proteome</keyword>
<keyword id="KW-0862">Zinc</keyword>
<name>CK054_BOVIN</name>
<evidence type="ECO:0000250" key="1"/>
<feature type="chain" id="PRO_0000246028" description="Ester hydrolase C11orf54 homolog">
    <location>
        <begin position="1"/>
        <end position="315"/>
    </location>
</feature>
<feature type="binding site" evidence="1">
    <location>
        <position position="266"/>
    </location>
    <ligand>
        <name>Zn(2+)</name>
        <dbReference type="ChEBI" id="CHEBI:29105"/>
        <note>catalytic</note>
    </ligand>
</feature>
<feature type="binding site" evidence="1">
    <location>
        <position position="268"/>
    </location>
    <ligand>
        <name>Zn(2+)</name>
        <dbReference type="ChEBI" id="CHEBI:29105"/>
        <note>catalytic</note>
    </ligand>
</feature>
<feature type="binding site" evidence="1">
    <location>
        <position position="278"/>
    </location>
    <ligand>
        <name>Zn(2+)</name>
        <dbReference type="ChEBI" id="CHEBI:29105"/>
        <note>catalytic</note>
    </ligand>
</feature>
<sequence>MACAEYSFHVPSLEELVGVLQKGLTDNFAEVQVSVVDCPDLTKEPFTFPIKGICGKTRIAEVGGVPYLLPLVNEKKVYDLNKIAKDIQLPGAFVLGAGAGPFQTLGFNSEFMLLVQTESEHRPPVNGSYFARVNPADGGCLLEKYSEKYHDFGCALLANLFASEGQPGKVIEVKVKRRTGKLNFVTCMRQTLEKHYGDKPVGMGGAFIIQKGKVKTHIMPAEFSSCPLNSDEDVNKWLHFYEMKAPLVCLPVFVSRDPGFDLRLEHTHCFSHHGEGGHYHYDTTPDIVEYLGYFLPAEFLYRIDQPKETHSFGRD</sequence>